<dbReference type="EMBL" id="AP006861">
    <property type="protein sequence ID" value="BAE81122.1"/>
    <property type="molecule type" value="Genomic_DNA"/>
</dbReference>
<dbReference type="RefSeq" id="WP_011457902.1">
    <property type="nucleotide sequence ID" value="NC_007899.1"/>
</dbReference>
<dbReference type="SMR" id="Q255B6"/>
<dbReference type="STRING" id="264202.CF0350"/>
<dbReference type="KEGG" id="cfe:CF0350"/>
<dbReference type="eggNOG" id="COG0254">
    <property type="taxonomic scope" value="Bacteria"/>
</dbReference>
<dbReference type="HOGENOM" id="CLU_114306_2_0_0"/>
<dbReference type="OrthoDB" id="9803251at2"/>
<dbReference type="Proteomes" id="UP000001260">
    <property type="component" value="Chromosome"/>
</dbReference>
<dbReference type="GO" id="GO:1990904">
    <property type="term" value="C:ribonucleoprotein complex"/>
    <property type="evidence" value="ECO:0007669"/>
    <property type="project" value="UniProtKB-KW"/>
</dbReference>
<dbReference type="GO" id="GO:0005840">
    <property type="term" value="C:ribosome"/>
    <property type="evidence" value="ECO:0007669"/>
    <property type="project" value="UniProtKB-KW"/>
</dbReference>
<dbReference type="GO" id="GO:0003735">
    <property type="term" value="F:structural constituent of ribosome"/>
    <property type="evidence" value="ECO:0007669"/>
    <property type="project" value="InterPro"/>
</dbReference>
<dbReference type="GO" id="GO:0006412">
    <property type="term" value="P:translation"/>
    <property type="evidence" value="ECO:0007669"/>
    <property type="project" value="UniProtKB-UniRule"/>
</dbReference>
<dbReference type="Gene3D" id="4.10.830.30">
    <property type="entry name" value="Ribosomal protein L31"/>
    <property type="match status" value="1"/>
</dbReference>
<dbReference type="HAMAP" id="MF_00502">
    <property type="entry name" value="Ribosomal_bL31_2"/>
    <property type="match status" value="1"/>
</dbReference>
<dbReference type="InterPro" id="IPR034704">
    <property type="entry name" value="Ribosomal_bL28/bL31-like_sf"/>
</dbReference>
<dbReference type="InterPro" id="IPR002150">
    <property type="entry name" value="Ribosomal_bL31"/>
</dbReference>
<dbReference type="InterPro" id="IPR027493">
    <property type="entry name" value="Ribosomal_bL31_B"/>
</dbReference>
<dbReference type="InterPro" id="IPR042105">
    <property type="entry name" value="Ribosomal_bL31_sf"/>
</dbReference>
<dbReference type="NCBIfam" id="TIGR00105">
    <property type="entry name" value="L31"/>
    <property type="match status" value="1"/>
</dbReference>
<dbReference type="NCBIfam" id="NF002462">
    <property type="entry name" value="PRK01678.1"/>
    <property type="match status" value="1"/>
</dbReference>
<dbReference type="PANTHER" id="PTHR33280">
    <property type="entry name" value="50S RIBOSOMAL PROTEIN L31, CHLOROPLASTIC"/>
    <property type="match status" value="1"/>
</dbReference>
<dbReference type="PANTHER" id="PTHR33280:SF1">
    <property type="entry name" value="LARGE RIBOSOMAL SUBUNIT PROTEIN BL31C"/>
    <property type="match status" value="1"/>
</dbReference>
<dbReference type="Pfam" id="PF01197">
    <property type="entry name" value="Ribosomal_L31"/>
    <property type="match status" value="1"/>
</dbReference>
<dbReference type="PRINTS" id="PR01249">
    <property type="entry name" value="RIBOSOMALL31"/>
</dbReference>
<dbReference type="SUPFAM" id="SSF143800">
    <property type="entry name" value="L28p-like"/>
    <property type="match status" value="1"/>
</dbReference>
<dbReference type="PROSITE" id="PS01143">
    <property type="entry name" value="RIBOSOMAL_L31"/>
    <property type="match status" value="1"/>
</dbReference>
<proteinExistence type="inferred from homology"/>
<protein>
    <recommendedName>
        <fullName evidence="1">Large ribosomal subunit protein bL31B</fullName>
    </recommendedName>
    <alternativeName>
        <fullName evidence="3">50S ribosomal protein L31 type B</fullName>
    </alternativeName>
</protein>
<accession>Q255B6</accession>
<gene>
    <name evidence="1" type="primary">rpmE2</name>
    <name type="ordered locus">CF0350</name>
</gene>
<keyword id="KW-0687">Ribonucleoprotein</keyword>
<keyword id="KW-0689">Ribosomal protein</keyword>
<evidence type="ECO:0000255" key="1">
    <source>
        <dbReference type="HAMAP-Rule" id="MF_00502"/>
    </source>
</evidence>
<evidence type="ECO:0000256" key="2">
    <source>
        <dbReference type="SAM" id="MobiDB-lite"/>
    </source>
</evidence>
<evidence type="ECO:0000305" key="3"/>
<comment type="subunit">
    <text evidence="1">Part of the 50S ribosomal subunit.</text>
</comment>
<comment type="similarity">
    <text evidence="1">Belongs to the bacterial ribosomal protein bL31 family. Type B subfamily.</text>
</comment>
<feature type="chain" id="PRO_0000259108" description="Large ribosomal subunit protein bL31B">
    <location>
        <begin position="1"/>
        <end position="106"/>
    </location>
</feature>
<feature type="region of interest" description="Disordered" evidence="2">
    <location>
        <begin position="85"/>
        <end position="106"/>
    </location>
</feature>
<feature type="compositionally biased region" description="Basic residues" evidence="2">
    <location>
        <begin position="95"/>
        <end position="106"/>
    </location>
</feature>
<sequence length="106" mass="11973">MKKNTHLDYKQVLFVDSSTGYKFVCGSTYQSDKTEVFEGQEYPVCYVSVSSSSHPFFTGSKRLVDAEGRVDKFLKRYSNVKPAQPVQVAEEPVAKGKKKPSLKKKK</sequence>
<organism>
    <name type="scientific">Chlamydia felis (strain Fe/C-56)</name>
    <name type="common">Chlamydophila felis</name>
    <dbReference type="NCBI Taxonomy" id="264202"/>
    <lineage>
        <taxon>Bacteria</taxon>
        <taxon>Pseudomonadati</taxon>
        <taxon>Chlamydiota</taxon>
        <taxon>Chlamydiia</taxon>
        <taxon>Chlamydiales</taxon>
        <taxon>Chlamydiaceae</taxon>
        <taxon>Chlamydia/Chlamydophila group</taxon>
        <taxon>Chlamydia</taxon>
    </lineage>
</organism>
<name>RL31B_CHLFF</name>
<reference key="1">
    <citation type="journal article" date="2006" name="DNA Res.">
        <title>Genome sequence of the cat pathogen, Chlamydophila felis.</title>
        <authorList>
            <person name="Azuma Y."/>
            <person name="Hirakawa H."/>
            <person name="Yamashita A."/>
            <person name="Cai Y."/>
            <person name="Rahman M.A."/>
            <person name="Suzuki H."/>
            <person name="Mitaku S."/>
            <person name="Toh H."/>
            <person name="Goto S."/>
            <person name="Murakami T."/>
            <person name="Sugi K."/>
            <person name="Hayashi H."/>
            <person name="Fukushi H."/>
            <person name="Hattori M."/>
            <person name="Kuhara S."/>
            <person name="Shirai M."/>
        </authorList>
    </citation>
    <scope>NUCLEOTIDE SEQUENCE [LARGE SCALE GENOMIC DNA]</scope>
    <source>
        <strain>Fe/C-56</strain>
    </source>
</reference>